<name>LAC3_BOTFU</name>
<comment type="function">
    <text evidence="2">Lignin degradation and detoxification of lignin-derived products.</text>
</comment>
<comment type="catalytic activity">
    <reaction evidence="2">
        <text>4 hydroquinone + O2 = 4 benzosemiquinone + 2 H2O</text>
        <dbReference type="Rhea" id="RHEA:11276"/>
        <dbReference type="ChEBI" id="CHEBI:15377"/>
        <dbReference type="ChEBI" id="CHEBI:15379"/>
        <dbReference type="ChEBI" id="CHEBI:17594"/>
        <dbReference type="ChEBI" id="CHEBI:17977"/>
        <dbReference type="EC" id="1.10.3.2"/>
    </reaction>
</comment>
<comment type="cofactor">
    <cofactor evidence="2">
        <name>Cu cation</name>
        <dbReference type="ChEBI" id="CHEBI:23378"/>
    </cofactor>
    <text evidence="2">Binds 4 Cu cations per monomer.</text>
</comment>
<comment type="subcellular location">
    <subcellularLocation>
        <location evidence="2">Secreted</location>
    </subcellularLocation>
</comment>
<comment type="similarity">
    <text evidence="4">Belongs to the multicopper oxidase family.</text>
</comment>
<accession>Q96UM2</accession>
<dbReference type="EC" id="1.10.3.2" evidence="2"/>
<dbReference type="EMBL" id="AY047482">
    <property type="protein sequence ID" value="AAL06114.1"/>
    <property type="molecule type" value="Genomic_DNA"/>
</dbReference>
<dbReference type="SMR" id="Q96UM2"/>
<dbReference type="CAZy" id="AA1">
    <property type="family name" value="Auxiliary Activities 1"/>
</dbReference>
<dbReference type="GlyCosmos" id="Q96UM2">
    <property type="glycosylation" value="7 sites, No reported glycans"/>
</dbReference>
<dbReference type="GO" id="GO:0005576">
    <property type="term" value="C:extracellular region"/>
    <property type="evidence" value="ECO:0007669"/>
    <property type="project" value="UniProtKB-SubCell"/>
</dbReference>
<dbReference type="GO" id="GO:0005507">
    <property type="term" value="F:copper ion binding"/>
    <property type="evidence" value="ECO:0007669"/>
    <property type="project" value="InterPro"/>
</dbReference>
<dbReference type="GO" id="GO:0052716">
    <property type="term" value="F:hydroquinone:oxygen oxidoreductase activity"/>
    <property type="evidence" value="ECO:0007669"/>
    <property type="project" value="UniProtKB-EC"/>
</dbReference>
<dbReference type="GO" id="GO:0046274">
    <property type="term" value="P:lignin catabolic process"/>
    <property type="evidence" value="ECO:0007669"/>
    <property type="project" value="UniProtKB-KW"/>
</dbReference>
<dbReference type="CDD" id="cd13880">
    <property type="entry name" value="CuRO_2_MaLCC_like"/>
    <property type="match status" value="1"/>
</dbReference>
<dbReference type="CDD" id="cd13901">
    <property type="entry name" value="CuRO_3_MaLCC_like"/>
    <property type="match status" value="1"/>
</dbReference>
<dbReference type="FunFam" id="2.60.40.420:FF:000038">
    <property type="entry name" value="Extracellular dihydrogeodin oxidase/laccase"/>
    <property type="match status" value="1"/>
</dbReference>
<dbReference type="Gene3D" id="2.60.40.420">
    <property type="entry name" value="Cupredoxins - blue copper proteins"/>
    <property type="match status" value="3"/>
</dbReference>
<dbReference type="InterPro" id="IPR011707">
    <property type="entry name" value="Cu-oxidase-like_N"/>
</dbReference>
<dbReference type="InterPro" id="IPR001117">
    <property type="entry name" value="Cu-oxidase_2nd"/>
</dbReference>
<dbReference type="InterPro" id="IPR011706">
    <property type="entry name" value="Cu-oxidase_C"/>
</dbReference>
<dbReference type="InterPro" id="IPR045087">
    <property type="entry name" value="Cu-oxidase_fam"/>
</dbReference>
<dbReference type="InterPro" id="IPR033138">
    <property type="entry name" value="Cu_oxidase_CS"/>
</dbReference>
<dbReference type="InterPro" id="IPR002355">
    <property type="entry name" value="Cu_oxidase_Cu_BS"/>
</dbReference>
<dbReference type="InterPro" id="IPR008972">
    <property type="entry name" value="Cupredoxin"/>
</dbReference>
<dbReference type="PANTHER" id="PTHR11709:SF87">
    <property type="entry name" value="LACCASE"/>
    <property type="match status" value="1"/>
</dbReference>
<dbReference type="PANTHER" id="PTHR11709">
    <property type="entry name" value="MULTI-COPPER OXIDASE"/>
    <property type="match status" value="1"/>
</dbReference>
<dbReference type="Pfam" id="PF00394">
    <property type="entry name" value="Cu-oxidase"/>
    <property type="match status" value="1"/>
</dbReference>
<dbReference type="Pfam" id="PF07731">
    <property type="entry name" value="Cu-oxidase_2"/>
    <property type="match status" value="1"/>
</dbReference>
<dbReference type="Pfam" id="PF07732">
    <property type="entry name" value="Cu-oxidase_3"/>
    <property type="match status" value="1"/>
</dbReference>
<dbReference type="SUPFAM" id="SSF49503">
    <property type="entry name" value="Cupredoxins"/>
    <property type="match status" value="3"/>
</dbReference>
<dbReference type="PROSITE" id="PS00079">
    <property type="entry name" value="MULTICOPPER_OXIDASE1"/>
    <property type="match status" value="1"/>
</dbReference>
<dbReference type="PROSITE" id="PS00080">
    <property type="entry name" value="MULTICOPPER_OXIDASE2"/>
    <property type="match status" value="1"/>
</dbReference>
<sequence length="454" mass="49323">PGPTLYADWGDMIQVTLKNSMPDNGTGIHWHGLRQYHTCTEDGVPGITECPLAPGDTKTYTFQATQFGTSWYHSHYSSQYGEGMLGGIVINGPATSNYDVDLGVYTISDWYYTPVFALGERIAHSQAGPPSGDNGLINGSMVAPAGQTGGKYTTNTITAGKKYRLRLINTSVDNHFMVSLDNHAFTVITSDFVPIVPYTANWIFIGIGQRYDVIITANQTVGSYWFRAEVQNGCGTNNNNGNIKSIFTYSGAASTTPSSSATPYTGRCTDETGIIPFWDSFVPSGPLSGNVEQLNVAINIGVDASGPIVTWGINLSAIDVDWKKPILQYVLDGNNSWPASENLIELPNAAQWYYWVIQEVPGNVNGNPVSINVPHPMHLHGHDFFLLGTGVGTYNNTINGPSLDYDNPTRRDVAMLPAGGWMVLAFQTDNPGAWLMHCHIAWHVSEGLAVQFQG</sequence>
<feature type="chain" id="PRO_0000267639" description="Laccase-3">
    <location>
        <begin position="1" status="less than"/>
        <end position="454" status="greater than"/>
    </location>
</feature>
<feature type="domain" description="Plastocyanin-like 1">
    <location>
        <begin position="1" status="less than"/>
        <end position="95"/>
    </location>
</feature>
<feature type="domain" description="Plastocyanin-like 2">
    <location>
        <begin position="101"/>
        <end position="252"/>
    </location>
</feature>
<feature type="domain" description="Plastocyanin-like 3">
    <location>
        <begin position="319"/>
        <end position="454"/>
    </location>
</feature>
<feature type="binding site" description="type 2 copper site" evidence="1">
    <location>
        <position position="29"/>
    </location>
    <ligand>
        <name>Cu cation</name>
        <dbReference type="ChEBI" id="CHEBI:23378"/>
        <label>1</label>
    </ligand>
</feature>
<feature type="binding site" description="type 3 copper site" evidence="1">
    <location>
        <position position="31"/>
    </location>
    <ligand>
        <name>Cu cation</name>
        <dbReference type="ChEBI" id="CHEBI:23378"/>
        <label>2</label>
    </ligand>
</feature>
<feature type="binding site" description="type 3 copper site" evidence="1">
    <location>
        <position position="73"/>
    </location>
    <ligand>
        <name>Cu cation</name>
        <dbReference type="ChEBI" id="CHEBI:23378"/>
        <label>2</label>
    </ligand>
</feature>
<feature type="binding site" description="type 3 copper site" evidence="1">
    <location>
        <position position="75"/>
    </location>
    <ligand>
        <name>Cu cation</name>
        <dbReference type="ChEBI" id="CHEBI:23378"/>
        <label>3</label>
    </ligand>
</feature>
<feature type="binding site" description="type 1 copper site" evidence="1">
    <location>
        <position position="375"/>
    </location>
    <ligand>
        <name>Cu cation</name>
        <dbReference type="ChEBI" id="CHEBI:23378"/>
        <label>4</label>
    </ligand>
</feature>
<feature type="binding site" description="type 2 copper site" evidence="1">
    <location>
        <position position="378"/>
    </location>
    <ligand>
        <name>Cu cation</name>
        <dbReference type="ChEBI" id="CHEBI:23378"/>
        <label>1</label>
    </ligand>
</feature>
<feature type="binding site" description="type 3 copper site" evidence="1">
    <location>
        <position position="380"/>
    </location>
    <ligand>
        <name>Cu cation</name>
        <dbReference type="ChEBI" id="CHEBI:23378"/>
        <label>3</label>
    </ligand>
</feature>
<feature type="binding site" description="type 3 copper site" evidence="1">
    <location>
        <position position="437"/>
    </location>
    <ligand>
        <name>Cu cation</name>
        <dbReference type="ChEBI" id="CHEBI:23378"/>
        <label>3</label>
    </ligand>
</feature>
<feature type="binding site" description="type 1 copper site" evidence="1">
    <location>
        <position position="438"/>
    </location>
    <ligand>
        <name>Cu cation</name>
        <dbReference type="ChEBI" id="CHEBI:23378"/>
        <label>4</label>
    </ligand>
</feature>
<feature type="binding site" description="type 3 copper site" evidence="1">
    <location>
        <position position="439"/>
    </location>
    <ligand>
        <name>Cu cation</name>
        <dbReference type="ChEBI" id="CHEBI:23378"/>
        <label>2</label>
    </ligand>
</feature>
<feature type="binding site" description="type 1 copper site" evidence="1">
    <location>
        <position position="443"/>
    </location>
    <ligand>
        <name>Cu cation</name>
        <dbReference type="ChEBI" id="CHEBI:23378"/>
        <label>4</label>
    </ligand>
</feature>
<feature type="glycosylation site" description="N-linked (GlcNAc...) asparagine" evidence="3">
    <location>
        <position position="24"/>
    </location>
</feature>
<feature type="glycosylation site" description="N-linked (GlcNAc...) asparagine" evidence="3">
    <location>
        <position position="138"/>
    </location>
</feature>
<feature type="glycosylation site" description="N-linked (GlcNAc...) asparagine" evidence="3">
    <location>
        <position position="169"/>
    </location>
</feature>
<feature type="glycosylation site" description="N-linked (GlcNAc...) asparagine" evidence="3">
    <location>
        <position position="218"/>
    </location>
</feature>
<feature type="glycosylation site" description="N-linked (GlcNAc...) asparagine" evidence="3">
    <location>
        <position position="314"/>
    </location>
</feature>
<feature type="glycosylation site" description="N-linked (GlcNAc...) asparagine" evidence="3">
    <location>
        <position position="334"/>
    </location>
</feature>
<feature type="glycosylation site" description="N-linked (GlcNAc...) asparagine" evidence="3">
    <location>
        <position position="395"/>
    </location>
</feature>
<feature type="non-terminal residue">
    <location>
        <position position="1"/>
    </location>
</feature>
<feature type="non-terminal residue">
    <location>
        <position position="454"/>
    </location>
</feature>
<organism>
    <name type="scientific">Botryotinia fuckeliana</name>
    <name type="common">Noble rot fungus</name>
    <name type="synonym">Botrytis cinerea</name>
    <dbReference type="NCBI Taxonomy" id="40559"/>
    <lineage>
        <taxon>Eukaryota</taxon>
        <taxon>Fungi</taxon>
        <taxon>Dikarya</taxon>
        <taxon>Ascomycota</taxon>
        <taxon>Pezizomycotina</taxon>
        <taxon>Leotiomycetes</taxon>
        <taxon>Helotiales</taxon>
        <taxon>Sclerotiniaceae</taxon>
        <taxon>Botrytis</taxon>
    </lineage>
</organism>
<proteinExistence type="inferred from homology"/>
<keyword id="KW-0186">Copper</keyword>
<keyword id="KW-0325">Glycoprotein</keyword>
<keyword id="KW-0439">Lignin degradation</keyword>
<keyword id="KW-0479">Metal-binding</keyword>
<keyword id="KW-0560">Oxidoreductase</keyword>
<keyword id="KW-0677">Repeat</keyword>
<keyword id="KW-0964">Secreted</keyword>
<evidence type="ECO:0000250" key="1">
    <source>
        <dbReference type="UniProtKB" id="D0VWU3"/>
    </source>
</evidence>
<evidence type="ECO:0000250" key="2">
    <source>
        <dbReference type="UniProtKB" id="Q70KY3"/>
    </source>
</evidence>
<evidence type="ECO:0000255" key="3"/>
<evidence type="ECO:0000305" key="4"/>
<protein>
    <recommendedName>
        <fullName>Laccase-3</fullName>
        <ecNumber evidence="2">1.10.3.2</ecNumber>
    </recommendedName>
    <alternativeName>
        <fullName>Benzenediol:oxygen oxidoreductase 3</fullName>
    </alternativeName>
    <alternativeName>
        <fullName>Diphenol oxidase 3</fullName>
    </alternativeName>
    <alternativeName>
        <fullName>Urishiol oxidase 3</fullName>
    </alternativeName>
</protein>
<reference key="1">
    <citation type="journal article" date="2002" name="Mol. Microbiol.">
        <title>Resveratrol acts as a natural profungicide and induces self-intoxication by a specific laccase.</title>
        <authorList>
            <person name="Schouten A."/>
            <person name="Wagemakers L."/>
            <person name="Stefanato F.L."/>
            <person name="van der Kaaij R.M."/>
            <person name="van Kan J.A.L."/>
        </authorList>
    </citation>
    <scope>NUCLEOTIDE SEQUENCE [GENOMIC DNA]</scope>
    <source>
        <strain>SAS56</strain>
    </source>
</reference>
<gene>
    <name type="primary">lcc3</name>
</gene>